<evidence type="ECO:0000255" key="1">
    <source>
        <dbReference type="HAMAP-Rule" id="MF_00528"/>
    </source>
</evidence>
<reference key="1">
    <citation type="journal article" date="2004" name="Nucleic Acids Res.">
        <title>The genome sequence of Bacillus cereus ATCC 10987 reveals metabolic adaptations and a large plasmid related to Bacillus anthracis pXO1.</title>
        <authorList>
            <person name="Rasko D.A."/>
            <person name="Ravel J."/>
            <person name="Oekstad O.A."/>
            <person name="Helgason E."/>
            <person name="Cer R.Z."/>
            <person name="Jiang L."/>
            <person name="Shores K.A."/>
            <person name="Fouts D.E."/>
            <person name="Tourasse N.J."/>
            <person name="Angiuoli S.V."/>
            <person name="Kolonay J.F."/>
            <person name="Nelson W.C."/>
            <person name="Kolstoe A.-B."/>
            <person name="Fraser C.M."/>
            <person name="Read T.D."/>
        </authorList>
    </citation>
    <scope>NUCLEOTIDE SEQUENCE [LARGE SCALE GENOMIC DNA]</scope>
    <source>
        <strain>ATCC 10987 / NRS 248</strain>
    </source>
</reference>
<keyword id="KW-0963">Cytoplasm</keyword>
<keyword id="KW-0378">Hydrolase</keyword>
<keyword id="KW-0546">Nucleotide metabolism</keyword>
<protein>
    <recommendedName>
        <fullName evidence="1">dTTP/UTP pyrophosphatase</fullName>
        <shortName evidence="1">dTTPase/UTPase</shortName>
        <ecNumber evidence="1">3.6.1.9</ecNumber>
    </recommendedName>
    <alternativeName>
        <fullName evidence="1">Nucleoside triphosphate pyrophosphatase</fullName>
    </alternativeName>
    <alternativeName>
        <fullName evidence="1">Nucleotide pyrophosphatase</fullName>
        <shortName evidence="1">Nucleotide PPase</shortName>
    </alternativeName>
</protein>
<comment type="function">
    <text evidence="1">Nucleoside triphosphate pyrophosphatase that hydrolyzes dTTP and UTP. May have a dual role in cell division arrest and in preventing the incorporation of modified nucleotides into cellular nucleic acids.</text>
</comment>
<comment type="catalytic activity">
    <reaction evidence="1">
        <text>dTTP + H2O = dTMP + diphosphate + H(+)</text>
        <dbReference type="Rhea" id="RHEA:28534"/>
        <dbReference type="ChEBI" id="CHEBI:15377"/>
        <dbReference type="ChEBI" id="CHEBI:15378"/>
        <dbReference type="ChEBI" id="CHEBI:33019"/>
        <dbReference type="ChEBI" id="CHEBI:37568"/>
        <dbReference type="ChEBI" id="CHEBI:63528"/>
        <dbReference type="EC" id="3.6.1.9"/>
    </reaction>
</comment>
<comment type="catalytic activity">
    <reaction evidence="1">
        <text>UTP + H2O = UMP + diphosphate + H(+)</text>
        <dbReference type="Rhea" id="RHEA:29395"/>
        <dbReference type="ChEBI" id="CHEBI:15377"/>
        <dbReference type="ChEBI" id="CHEBI:15378"/>
        <dbReference type="ChEBI" id="CHEBI:33019"/>
        <dbReference type="ChEBI" id="CHEBI:46398"/>
        <dbReference type="ChEBI" id="CHEBI:57865"/>
        <dbReference type="EC" id="3.6.1.9"/>
    </reaction>
</comment>
<comment type="cofactor">
    <cofactor evidence="1">
        <name>a divalent metal cation</name>
        <dbReference type="ChEBI" id="CHEBI:60240"/>
    </cofactor>
</comment>
<comment type="subcellular location">
    <subcellularLocation>
        <location evidence="1">Cytoplasm</location>
    </subcellularLocation>
</comment>
<comment type="similarity">
    <text evidence="1">Belongs to the Maf family. YhdE subfamily.</text>
</comment>
<sequence length="203" mass="22414">MILLHVRKEGENMKKIILASGSPRRKELLELAGVPFEIVVSEVEETIGAYSSPSDIVMSLALQKASAVAENNSDHIVLGADTIVTYESRILGKPSNEAEAKEMLQLLSGKTHEVYTGVAIIAKDKTVTFYERTEVTFWELTEEEIDAYIASKEPLDKAGSYGIQGKGSIFVQHIQGDYYSVVGLPISRLVRELKQFNIDVTHA</sequence>
<name>NTPPA_BACC1</name>
<proteinExistence type="inferred from homology"/>
<feature type="chain" id="PRO_0000267229" description="dTTP/UTP pyrophosphatase">
    <location>
        <begin position="1"/>
        <end position="203"/>
    </location>
</feature>
<feature type="active site" description="Proton acceptor" evidence="1">
    <location>
        <position position="81"/>
    </location>
</feature>
<feature type="site" description="Important for substrate specificity" evidence="1">
    <location>
        <position position="24"/>
    </location>
</feature>
<feature type="site" description="Important for substrate specificity" evidence="1">
    <location>
        <position position="82"/>
    </location>
</feature>
<feature type="site" description="Important for substrate specificity" evidence="1">
    <location>
        <position position="164"/>
    </location>
</feature>
<accession>Q72ZX1</accession>
<gene>
    <name type="primary">maf</name>
    <name type="ordered locus">BCE_4546</name>
</gene>
<organism>
    <name type="scientific">Bacillus cereus (strain ATCC 10987 / NRS 248)</name>
    <dbReference type="NCBI Taxonomy" id="222523"/>
    <lineage>
        <taxon>Bacteria</taxon>
        <taxon>Bacillati</taxon>
        <taxon>Bacillota</taxon>
        <taxon>Bacilli</taxon>
        <taxon>Bacillales</taxon>
        <taxon>Bacillaceae</taxon>
        <taxon>Bacillus</taxon>
        <taxon>Bacillus cereus group</taxon>
    </lineage>
</organism>
<dbReference type="EC" id="3.6.1.9" evidence="1"/>
<dbReference type="EMBL" id="AE017194">
    <property type="protein sequence ID" value="AAS43447.1"/>
    <property type="molecule type" value="Genomic_DNA"/>
</dbReference>
<dbReference type="SMR" id="Q72ZX1"/>
<dbReference type="KEGG" id="bca:BCE_4546"/>
<dbReference type="HOGENOM" id="CLU_040416_0_0_9"/>
<dbReference type="Proteomes" id="UP000002527">
    <property type="component" value="Chromosome"/>
</dbReference>
<dbReference type="GO" id="GO:0005737">
    <property type="term" value="C:cytoplasm"/>
    <property type="evidence" value="ECO:0007669"/>
    <property type="project" value="UniProtKB-SubCell"/>
</dbReference>
<dbReference type="GO" id="GO:0036218">
    <property type="term" value="F:dTTP diphosphatase activity"/>
    <property type="evidence" value="ECO:0007669"/>
    <property type="project" value="RHEA"/>
</dbReference>
<dbReference type="GO" id="GO:0036221">
    <property type="term" value="F:UTP diphosphatase activity"/>
    <property type="evidence" value="ECO:0007669"/>
    <property type="project" value="RHEA"/>
</dbReference>
<dbReference type="GO" id="GO:0009117">
    <property type="term" value="P:nucleotide metabolic process"/>
    <property type="evidence" value="ECO:0007669"/>
    <property type="project" value="UniProtKB-KW"/>
</dbReference>
<dbReference type="CDD" id="cd00555">
    <property type="entry name" value="Maf"/>
    <property type="match status" value="1"/>
</dbReference>
<dbReference type="FunFam" id="3.90.950.10:FF:000007">
    <property type="entry name" value="dTTP/UTP pyrophosphatase"/>
    <property type="match status" value="1"/>
</dbReference>
<dbReference type="Gene3D" id="3.90.950.10">
    <property type="match status" value="1"/>
</dbReference>
<dbReference type="HAMAP" id="MF_00528">
    <property type="entry name" value="Maf"/>
    <property type="match status" value="1"/>
</dbReference>
<dbReference type="InterPro" id="IPR029001">
    <property type="entry name" value="ITPase-like_fam"/>
</dbReference>
<dbReference type="InterPro" id="IPR003697">
    <property type="entry name" value="Maf-like"/>
</dbReference>
<dbReference type="NCBIfam" id="TIGR00172">
    <property type="entry name" value="maf"/>
    <property type="match status" value="1"/>
</dbReference>
<dbReference type="PANTHER" id="PTHR43213">
    <property type="entry name" value="BIFUNCTIONAL DTTP/UTP PYROPHOSPHATASE/METHYLTRANSFERASE PROTEIN-RELATED"/>
    <property type="match status" value="1"/>
</dbReference>
<dbReference type="PANTHER" id="PTHR43213:SF5">
    <property type="entry name" value="BIFUNCTIONAL DTTP_UTP PYROPHOSPHATASE_METHYLTRANSFERASE PROTEIN-RELATED"/>
    <property type="match status" value="1"/>
</dbReference>
<dbReference type="Pfam" id="PF02545">
    <property type="entry name" value="Maf"/>
    <property type="match status" value="1"/>
</dbReference>
<dbReference type="PIRSF" id="PIRSF006305">
    <property type="entry name" value="Maf"/>
    <property type="match status" value="1"/>
</dbReference>
<dbReference type="SUPFAM" id="SSF52972">
    <property type="entry name" value="ITPase-like"/>
    <property type="match status" value="1"/>
</dbReference>